<evidence type="ECO:0000255" key="1">
    <source>
        <dbReference type="HAMAP-Rule" id="MF_00061"/>
    </source>
</evidence>
<evidence type="ECO:0000256" key="2">
    <source>
        <dbReference type="SAM" id="MobiDB-lite"/>
    </source>
</evidence>
<sequence length="305" mass="32560">MRLQTIAPAKVNLVLRVGPPRRDGYHGIRSLMVPLDLGDRVDVSVGERAGPVTCRVPGRPELDGADNLAARAAERFRARFGVERTIGIRIAKRIPVTAGLGGGSSDAAAVLRCLARAFGIRDRAALAAIALEVGSDVPFFLGPGPAWAEGRGERLTPADVPPQHLVLVYPDDPALAIRAGEAYRWLDASRQGRRPRLPPRFARFEPSRAGNDLQPPCLLERPPLATLLGLLVGRGATAAIMSGSGPTVFGTFHSRNAAARAARTIAEEVVDRKVMVLAATTVRRHPGVTPWRSPRSASSPSTKRS</sequence>
<gene>
    <name evidence="1" type="primary">ispE</name>
    <name type="ordered locus">Anae109_0127</name>
</gene>
<protein>
    <recommendedName>
        <fullName evidence="1">4-diphosphocytidyl-2-C-methyl-D-erythritol kinase</fullName>
        <shortName evidence="1">CMK</shortName>
        <ecNumber evidence="1">2.7.1.148</ecNumber>
    </recommendedName>
    <alternativeName>
        <fullName evidence="1">4-(cytidine-5'-diphospho)-2-C-methyl-D-erythritol kinase</fullName>
    </alternativeName>
</protein>
<reference key="1">
    <citation type="journal article" date="2015" name="Genome Announc.">
        <title>Complete genome sequence of Anaeromyxobacter sp. Fw109-5, an anaerobic, metal-reducing bacterium isolated from a contaminated subsurface environment.</title>
        <authorList>
            <person name="Hwang C."/>
            <person name="Copeland A."/>
            <person name="Lucas S."/>
            <person name="Lapidus A."/>
            <person name="Barry K."/>
            <person name="Glavina Del Rio T."/>
            <person name="Dalin E."/>
            <person name="Tice H."/>
            <person name="Pitluck S."/>
            <person name="Sims D."/>
            <person name="Brettin T."/>
            <person name="Bruce D.C."/>
            <person name="Detter J.C."/>
            <person name="Han C.S."/>
            <person name="Schmutz J."/>
            <person name="Larimer F.W."/>
            <person name="Land M.L."/>
            <person name="Hauser L.J."/>
            <person name="Kyrpides N."/>
            <person name="Lykidis A."/>
            <person name="Richardson P."/>
            <person name="Belieav A."/>
            <person name="Sanford R.A."/>
            <person name="Loeffler F.E."/>
            <person name="Fields M.W."/>
        </authorList>
    </citation>
    <scope>NUCLEOTIDE SEQUENCE [LARGE SCALE GENOMIC DNA]</scope>
    <source>
        <strain>Fw109-5</strain>
    </source>
</reference>
<accession>A7H6J9</accession>
<name>ISPE_ANADF</name>
<keyword id="KW-0067">ATP-binding</keyword>
<keyword id="KW-0414">Isoprene biosynthesis</keyword>
<keyword id="KW-0418">Kinase</keyword>
<keyword id="KW-0547">Nucleotide-binding</keyword>
<keyword id="KW-1185">Reference proteome</keyword>
<keyword id="KW-0808">Transferase</keyword>
<dbReference type="EC" id="2.7.1.148" evidence="1"/>
<dbReference type="EMBL" id="CP000769">
    <property type="protein sequence ID" value="ABS24345.1"/>
    <property type="molecule type" value="Genomic_DNA"/>
</dbReference>
<dbReference type="RefSeq" id="WP_011984451.1">
    <property type="nucleotide sequence ID" value="NC_009675.1"/>
</dbReference>
<dbReference type="SMR" id="A7H6J9"/>
<dbReference type="STRING" id="404589.Anae109_0127"/>
<dbReference type="KEGG" id="afw:Anae109_0127"/>
<dbReference type="eggNOG" id="COG1947">
    <property type="taxonomic scope" value="Bacteria"/>
</dbReference>
<dbReference type="HOGENOM" id="CLU_053057_1_1_7"/>
<dbReference type="OrthoDB" id="9809438at2"/>
<dbReference type="UniPathway" id="UPA00056">
    <property type="reaction ID" value="UER00094"/>
</dbReference>
<dbReference type="Proteomes" id="UP000006382">
    <property type="component" value="Chromosome"/>
</dbReference>
<dbReference type="GO" id="GO:0050515">
    <property type="term" value="F:4-(cytidine 5'-diphospho)-2-C-methyl-D-erythritol kinase activity"/>
    <property type="evidence" value="ECO:0007669"/>
    <property type="project" value="UniProtKB-UniRule"/>
</dbReference>
<dbReference type="GO" id="GO:0005524">
    <property type="term" value="F:ATP binding"/>
    <property type="evidence" value="ECO:0007669"/>
    <property type="project" value="UniProtKB-UniRule"/>
</dbReference>
<dbReference type="GO" id="GO:0019288">
    <property type="term" value="P:isopentenyl diphosphate biosynthetic process, methylerythritol 4-phosphate pathway"/>
    <property type="evidence" value="ECO:0007669"/>
    <property type="project" value="UniProtKB-UniRule"/>
</dbReference>
<dbReference type="GO" id="GO:0016114">
    <property type="term" value="P:terpenoid biosynthetic process"/>
    <property type="evidence" value="ECO:0007669"/>
    <property type="project" value="InterPro"/>
</dbReference>
<dbReference type="Gene3D" id="3.30.230.10">
    <property type="match status" value="1"/>
</dbReference>
<dbReference type="Gene3D" id="3.30.70.890">
    <property type="entry name" value="GHMP kinase, C-terminal domain"/>
    <property type="match status" value="1"/>
</dbReference>
<dbReference type="HAMAP" id="MF_00061">
    <property type="entry name" value="IspE"/>
    <property type="match status" value="1"/>
</dbReference>
<dbReference type="InterPro" id="IPR013750">
    <property type="entry name" value="GHMP_kinase_C_dom"/>
</dbReference>
<dbReference type="InterPro" id="IPR036554">
    <property type="entry name" value="GHMP_kinase_C_sf"/>
</dbReference>
<dbReference type="InterPro" id="IPR006204">
    <property type="entry name" value="GHMP_kinase_N_dom"/>
</dbReference>
<dbReference type="InterPro" id="IPR004424">
    <property type="entry name" value="IspE"/>
</dbReference>
<dbReference type="InterPro" id="IPR020568">
    <property type="entry name" value="Ribosomal_Su5_D2-typ_SF"/>
</dbReference>
<dbReference type="InterPro" id="IPR014721">
    <property type="entry name" value="Ribsml_uS5_D2-typ_fold_subgr"/>
</dbReference>
<dbReference type="NCBIfam" id="TIGR00154">
    <property type="entry name" value="ispE"/>
    <property type="match status" value="1"/>
</dbReference>
<dbReference type="PANTHER" id="PTHR43527">
    <property type="entry name" value="4-DIPHOSPHOCYTIDYL-2-C-METHYL-D-ERYTHRITOL KINASE, CHLOROPLASTIC"/>
    <property type="match status" value="1"/>
</dbReference>
<dbReference type="PANTHER" id="PTHR43527:SF2">
    <property type="entry name" value="4-DIPHOSPHOCYTIDYL-2-C-METHYL-D-ERYTHRITOL KINASE, CHLOROPLASTIC"/>
    <property type="match status" value="1"/>
</dbReference>
<dbReference type="Pfam" id="PF08544">
    <property type="entry name" value="GHMP_kinases_C"/>
    <property type="match status" value="1"/>
</dbReference>
<dbReference type="Pfam" id="PF00288">
    <property type="entry name" value="GHMP_kinases_N"/>
    <property type="match status" value="1"/>
</dbReference>
<dbReference type="PIRSF" id="PIRSF010376">
    <property type="entry name" value="IspE"/>
    <property type="match status" value="1"/>
</dbReference>
<dbReference type="SUPFAM" id="SSF55060">
    <property type="entry name" value="GHMP Kinase, C-terminal domain"/>
    <property type="match status" value="1"/>
</dbReference>
<dbReference type="SUPFAM" id="SSF54211">
    <property type="entry name" value="Ribosomal protein S5 domain 2-like"/>
    <property type="match status" value="1"/>
</dbReference>
<feature type="chain" id="PRO_1000007808" description="4-diphosphocytidyl-2-C-methyl-D-erythritol kinase">
    <location>
        <begin position="1"/>
        <end position="305"/>
    </location>
</feature>
<feature type="region of interest" description="Disordered" evidence="2">
    <location>
        <begin position="286"/>
        <end position="305"/>
    </location>
</feature>
<feature type="compositionally biased region" description="Low complexity" evidence="2">
    <location>
        <begin position="290"/>
        <end position="305"/>
    </location>
</feature>
<feature type="active site" evidence="1">
    <location>
        <position position="10"/>
    </location>
</feature>
<feature type="active site" evidence="1">
    <location>
        <position position="136"/>
    </location>
</feature>
<feature type="binding site" evidence="1">
    <location>
        <begin position="95"/>
        <end position="105"/>
    </location>
    <ligand>
        <name>ATP</name>
        <dbReference type="ChEBI" id="CHEBI:30616"/>
    </ligand>
</feature>
<proteinExistence type="inferred from homology"/>
<organism>
    <name type="scientific">Anaeromyxobacter sp. (strain Fw109-5)</name>
    <dbReference type="NCBI Taxonomy" id="404589"/>
    <lineage>
        <taxon>Bacteria</taxon>
        <taxon>Pseudomonadati</taxon>
        <taxon>Myxococcota</taxon>
        <taxon>Myxococcia</taxon>
        <taxon>Myxococcales</taxon>
        <taxon>Cystobacterineae</taxon>
        <taxon>Anaeromyxobacteraceae</taxon>
        <taxon>Anaeromyxobacter</taxon>
    </lineage>
</organism>
<comment type="function">
    <text evidence="1">Catalyzes the phosphorylation of the position 2 hydroxy group of 4-diphosphocytidyl-2C-methyl-D-erythritol.</text>
</comment>
<comment type="catalytic activity">
    <reaction evidence="1">
        <text>4-CDP-2-C-methyl-D-erythritol + ATP = 4-CDP-2-C-methyl-D-erythritol 2-phosphate + ADP + H(+)</text>
        <dbReference type="Rhea" id="RHEA:18437"/>
        <dbReference type="ChEBI" id="CHEBI:15378"/>
        <dbReference type="ChEBI" id="CHEBI:30616"/>
        <dbReference type="ChEBI" id="CHEBI:57823"/>
        <dbReference type="ChEBI" id="CHEBI:57919"/>
        <dbReference type="ChEBI" id="CHEBI:456216"/>
        <dbReference type="EC" id="2.7.1.148"/>
    </reaction>
</comment>
<comment type="pathway">
    <text evidence="1">Isoprenoid biosynthesis; isopentenyl diphosphate biosynthesis via DXP pathway; isopentenyl diphosphate from 1-deoxy-D-xylulose 5-phosphate: step 3/6.</text>
</comment>
<comment type="similarity">
    <text evidence="1">Belongs to the GHMP kinase family. IspE subfamily.</text>
</comment>